<organism>
    <name type="scientific">Arabidopsis thaliana</name>
    <name type="common">Mouse-ear cress</name>
    <dbReference type="NCBI Taxonomy" id="3702"/>
    <lineage>
        <taxon>Eukaryota</taxon>
        <taxon>Viridiplantae</taxon>
        <taxon>Streptophyta</taxon>
        <taxon>Embryophyta</taxon>
        <taxon>Tracheophyta</taxon>
        <taxon>Spermatophyta</taxon>
        <taxon>Magnoliopsida</taxon>
        <taxon>eudicotyledons</taxon>
        <taxon>Gunneridae</taxon>
        <taxon>Pentapetalae</taxon>
        <taxon>rosids</taxon>
        <taxon>malvids</taxon>
        <taxon>Brassicales</taxon>
        <taxon>Brassicaceae</taxon>
        <taxon>Camelineae</taxon>
        <taxon>Arabidopsis</taxon>
    </lineage>
</organism>
<proteinExistence type="evidence at transcript level"/>
<protein>
    <recommendedName>
        <fullName>Phospholipid--sterol O-acyltransferase</fullName>
        <ecNumber>2.3.1.-</ecNumber>
    </recommendedName>
    <alternativeName>
        <fullName>Lecithin-cholesterol acyltransferase-like 2</fullName>
    </alternativeName>
</protein>
<comment type="function">
    <text evidence="3 4">Involved in lipid catabolism. Essential for sterol esters biosynthesis in leaves and seeds, but not in flowers. Plays a role in controlling the free sterol content of leaves. Catalyzes the transacylation of acyl groups from phospholipids to a variety of different sterols. Prefers phosphatidylethanolamine over phosphatidylcholine as an acyl donor. Not active toward neutral lipids. Highly specific for position sn-2, which in plant lipids is essentially devoid of saturated acyl groups. Broad sterol specificity (cholesterol &gt; campesterol &gt; sitosterol &gt; stigmasterol), but no activity with lupeol or beta-amyrin.</text>
</comment>
<comment type="subcellular location">
    <subcellularLocation>
        <location evidence="3">Microsome membrane</location>
        <topology evidence="3">Single-pass type II membrane protein</topology>
    </subcellularLocation>
</comment>
<comment type="induction">
    <text evidence="4">By senescence.</text>
</comment>
<comment type="disruption phenotype">
    <text evidence="3 4">Early leaf senescence. Strong reduction in total sterol esters content in leaves and seeds. No change in flowers.</text>
</comment>
<comment type="similarity">
    <text evidence="5">Belongs to the AB hydrolase superfamily. Lipase family.</text>
</comment>
<comment type="sequence caution" evidence="5">
    <conflict type="erroneous gene model prediction">
        <sequence resource="EMBL-CDS" id="AAD10668"/>
    </conflict>
</comment>
<feature type="chain" id="PRO_0000398820" description="Phospholipid--sterol O-acyltransferase">
    <location>
        <begin position="1"/>
        <end position="633"/>
    </location>
</feature>
<feature type="topological domain" description="Cytoplasmic" evidence="2">
    <location>
        <begin position="1"/>
        <end position="6"/>
    </location>
</feature>
<feature type="transmembrane region" description="Helical; Signal-anchor for type II membrane protein" evidence="2">
    <location>
        <begin position="7"/>
        <end position="29"/>
    </location>
</feature>
<feature type="topological domain" description="Lumenal" evidence="2">
    <location>
        <begin position="30"/>
        <end position="633"/>
    </location>
</feature>
<feature type="active site" description="Acyl-ester intermediate" evidence="2">
    <location>
        <position position="195"/>
    </location>
</feature>
<feature type="active site" description="Charge relay system" evidence="1">
    <location>
        <position position="461"/>
    </location>
</feature>
<feature type="active site" description="Charge relay system" evidence="1">
    <location>
        <position position="505"/>
    </location>
</feature>
<feature type="sequence conflict" description="In Ref. 1; AAY43920." evidence="5" ref="1">
    <original>I</original>
    <variation>V</variation>
    <location>
        <position position="145"/>
    </location>
</feature>
<name>LCAT2_ARATH</name>
<keyword id="KW-0012">Acyltransferase</keyword>
<keyword id="KW-0256">Endoplasmic reticulum</keyword>
<keyword id="KW-0443">Lipid metabolism</keyword>
<keyword id="KW-0472">Membrane</keyword>
<keyword id="KW-0492">Microsome</keyword>
<keyword id="KW-1185">Reference proteome</keyword>
<keyword id="KW-0735">Signal-anchor</keyword>
<keyword id="KW-0753">Steroid metabolism</keyword>
<keyword id="KW-0808">Transferase</keyword>
<keyword id="KW-0812">Transmembrane</keyword>
<keyword id="KW-1133">Transmembrane helix</keyword>
<sequence>MGANSKSVTASFTVIAVFFLICGGRTAVEDETEFHGDYSKLSGIIIPGFASTQLRAWSILDCPYTPLDFNPLDLVWLDTTKLLSAVNCWFKCMVLDPYNQTDHPECKSRPDSGLSAITELDPGYITGPLSTVWKEWLKWCVEFGIEANAIVAVPYDWRLSPTKLEERDLYFHKLKLTFETALKLRGGPSIVFAHSMGNNVFRYFLEWLRLEIAPKHYLKWLDQHIHAYFAVGAPLLGSVEAIKSTLSGVTFGLPVSEGTARLLSNSFASSLWLMPFSKNCKGDNTFWTHFSGGAAKKDKRVYHCDEEEYQSKYSGWPTNIINIEIPSTSVTETALVNMTSMECGLPTLLSFTARELADGTLFKAIEDYDPDSKRMLHQLKKLYHDDPVFNPLTPWERPPIKNVFCIYGAHLKTEVGYYFAPSGKPYPDNWIITDIIYETEGSLVSRSGTVVDGNAGPITGDETVPYHSLSWCKNWLGPKVNITMAPQPEHDGSDVHVELNVDHEHGSDIIANMTKAPRVKYITFYEDSESIPGKRTAVWELDKTNHRNIVRSPVLMRELWLQMWHDIQPGAKSKFVTKAKRGPLRDADCYWDYGKACCAWQEYCEYRYSFGDVHLGQSCRLRNTSANMLLQYI</sequence>
<evidence type="ECO:0000250" key="1"/>
<evidence type="ECO:0000255" key="2"/>
<evidence type="ECO:0000269" key="3">
    <source>
    </source>
</evidence>
<evidence type="ECO:0000269" key="4">
    <source>
    </source>
</evidence>
<evidence type="ECO:0000305" key="5"/>
<dbReference type="EC" id="2.3.1.-"/>
<dbReference type="EMBL" id="AY989885">
    <property type="protein sequence ID" value="AAY43920.1"/>
    <property type="molecule type" value="mRNA"/>
</dbReference>
<dbReference type="EMBL" id="AC003027">
    <property type="protein sequence ID" value="AAD10668.1"/>
    <property type="status" value="ALT_SEQ"/>
    <property type="molecule type" value="Genomic_DNA"/>
</dbReference>
<dbReference type="EMBL" id="CP002684">
    <property type="protein sequence ID" value="AEE27645.1"/>
    <property type="molecule type" value="Genomic_DNA"/>
</dbReference>
<dbReference type="PIR" id="C86171">
    <property type="entry name" value="C86171"/>
</dbReference>
<dbReference type="RefSeq" id="NP_171897.2">
    <property type="nucleotide sequence ID" value="NM_100282.4"/>
</dbReference>
<dbReference type="SMR" id="Q4VCM1"/>
<dbReference type="BioGRID" id="24570">
    <property type="interactions" value="1"/>
</dbReference>
<dbReference type="FunCoup" id="Q4VCM1">
    <property type="interactions" value="619"/>
</dbReference>
<dbReference type="STRING" id="3702.Q4VCM1"/>
<dbReference type="ESTHER" id="arath-LCAT2">
    <property type="family name" value="PC-sterol_acyltransferase"/>
</dbReference>
<dbReference type="iPTMnet" id="Q4VCM1"/>
<dbReference type="PaxDb" id="3702-AT1G04010.1"/>
<dbReference type="ProteomicsDB" id="237158"/>
<dbReference type="EnsemblPlants" id="AT1G04010.1">
    <property type="protein sequence ID" value="AT1G04010.1"/>
    <property type="gene ID" value="AT1G04010"/>
</dbReference>
<dbReference type="GeneID" id="839335"/>
<dbReference type="Gramene" id="AT1G04010.1">
    <property type="protein sequence ID" value="AT1G04010.1"/>
    <property type="gene ID" value="AT1G04010"/>
</dbReference>
<dbReference type="KEGG" id="ath:AT1G04010"/>
<dbReference type="Araport" id="AT1G04010"/>
<dbReference type="TAIR" id="AT1G04010">
    <property type="gene designation" value="PSAT1"/>
</dbReference>
<dbReference type="eggNOG" id="KOG2369">
    <property type="taxonomic scope" value="Eukaryota"/>
</dbReference>
<dbReference type="HOGENOM" id="CLU_024778_0_0_1"/>
<dbReference type="InParanoid" id="Q4VCM1"/>
<dbReference type="OMA" id="ARRMCNS"/>
<dbReference type="OrthoDB" id="190846at2759"/>
<dbReference type="PhylomeDB" id="Q4VCM1"/>
<dbReference type="PRO" id="PR:Q4VCM1"/>
<dbReference type="Proteomes" id="UP000006548">
    <property type="component" value="Chromosome 1"/>
</dbReference>
<dbReference type="ExpressionAtlas" id="Q4VCM1">
    <property type="expression patterns" value="baseline and differential"/>
</dbReference>
<dbReference type="GO" id="GO:0005783">
    <property type="term" value="C:endoplasmic reticulum"/>
    <property type="evidence" value="ECO:0007669"/>
    <property type="project" value="UniProtKB-KW"/>
</dbReference>
<dbReference type="GO" id="GO:0043231">
    <property type="term" value="C:intracellular membrane-bounded organelle"/>
    <property type="evidence" value="ECO:0000314"/>
    <property type="project" value="TAIR"/>
</dbReference>
<dbReference type="GO" id="GO:0016020">
    <property type="term" value="C:membrane"/>
    <property type="evidence" value="ECO:0007669"/>
    <property type="project" value="UniProtKB-KW"/>
</dbReference>
<dbReference type="GO" id="GO:0016747">
    <property type="term" value="F:acyltransferase activity, transferring groups other than amino-acyl groups"/>
    <property type="evidence" value="ECO:0000314"/>
    <property type="project" value="TAIR"/>
</dbReference>
<dbReference type="GO" id="GO:0080096">
    <property type="term" value="F:phosphatidate-sterol O-acyltransferase activity"/>
    <property type="evidence" value="ECO:0000314"/>
    <property type="project" value="TAIR"/>
</dbReference>
<dbReference type="GO" id="GO:0004607">
    <property type="term" value="F:phosphatidylcholine-sterol O-acyltransferase activity"/>
    <property type="evidence" value="ECO:0000314"/>
    <property type="project" value="TAIR"/>
</dbReference>
<dbReference type="GO" id="GO:0080095">
    <property type="term" value="F:phosphatidylethanolamine-sterol O-acyltransferase activity"/>
    <property type="evidence" value="ECO:0000314"/>
    <property type="project" value="TAIR"/>
</dbReference>
<dbReference type="GO" id="GO:0010150">
    <property type="term" value="P:leaf senescence"/>
    <property type="evidence" value="ECO:0000315"/>
    <property type="project" value="TAIR"/>
</dbReference>
<dbReference type="GO" id="GO:0016127">
    <property type="term" value="P:sterol catabolic process"/>
    <property type="evidence" value="ECO:0000315"/>
    <property type="project" value="TAIR"/>
</dbReference>
<dbReference type="Gene3D" id="3.40.50.1820">
    <property type="entry name" value="alpha/beta hydrolase"/>
    <property type="match status" value="1"/>
</dbReference>
<dbReference type="InterPro" id="IPR029058">
    <property type="entry name" value="AB_hydrolase_fold"/>
</dbReference>
<dbReference type="InterPro" id="IPR003386">
    <property type="entry name" value="LACT/PDAT_acylTrfase"/>
</dbReference>
<dbReference type="PANTHER" id="PTHR11440">
    <property type="entry name" value="LECITHIN-CHOLESTEROL ACYLTRANSFERASE-RELATED"/>
    <property type="match status" value="1"/>
</dbReference>
<dbReference type="Pfam" id="PF02450">
    <property type="entry name" value="LCAT"/>
    <property type="match status" value="1"/>
</dbReference>
<dbReference type="SUPFAM" id="SSF53474">
    <property type="entry name" value="alpha/beta-Hydrolases"/>
    <property type="match status" value="1"/>
</dbReference>
<gene>
    <name type="primary">PSAT</name>
    <name type="synonym">LCAT2</name>
    <name type="synonym">PSAT1</name>
    <name type="ordered locus">At1g04010</name>
    <name type="ORF">F21M11.5</name>
</gene>
<reference key="1">
    <citation type="journal article" date="2005" name="J. Biol. Chem.">
        <title>Cellular sterol ester synthesis in plants is performed by an enzyme (phospholipid:sterol acyltransferase) different from the yeast and mammalian acyl-CoA:sterol acyltransferases.</title>
        <authorList>
            <person name="Banas A."/>
            <person name="Carlsson A.S."/>
            <person name="Huang B."/>
            <person name="Lenman M."/>
            <person name="Banas W."/>
            <person name="Lee M."/>
            <person name="Noiriel A."/>
            <person name="Benveniste P."/>
            <person name="Schaller H."/>
            <person name="Bouvier-Nave P."/>
            <person name="Stymne S."/>
        </authorList>
    </citation>
    <scope>NUCLEOTIDE SEQUENCE [MRNA]</scope>
    <scope>FUNCTION</scope>
    <scope>SUBCELLULAR LOCATION</scope>
    <scope>DISRUPTION PHENOTYPE</scope>
    <source>
        <strain>cv. Columbia</strain>
    </source>
</reference>
<reference key="2">
    <citation type="journal article" date="2000" name="Nature">
        <title>Sequence and analysis of chromosome 1 of the plant Arabidopsis thaliana.</title>
        <authorList>
            <person name="Theologis A."/>
            <person name="Ecker J.R."/>
            <person name="Palm C.J."/>
            <person name="Federspiel N.A."/>
            <person name="Kaul S."/>
            <person name="White O."/>
            <person name="Alonso J."/>
            <person name="Altafi H."/>
            <person name="Araujo R."/>
            <person name="Bowman C.L."/>
            <person name="Brooks S.Y."/>
            <person name="Buehler E."/>
            <person name="Chan A."/>
            <person name="Chao Q."/>
            <person name="Chen H."/>
            <person name="Cheuk R.F."/>
            <person name="Chin C.W."/>
            <person name="Chung M.K."/>
            <person name="Conn L."/>
            <person name="Conway A.B."/>
            <person name="Conway A.R."/>
            <person name="Creasy T.H."/>
            <person name="Dewar K."/>
            <person name="Dunn P."/>
            <person name="Etgu P."/>
            <person name="Feldblyum T.V."/>
            <person name="Feng J.-D."/>
            <person name="Fong B."/>
            <person name="Fujii C.Y."/>
            <person name="Gill J.E."/>
            <person name="Goldsmith A.D."/>
            <person name="Haas B."/>
            <person name="Hansen N.F."/>
            <person name="Hughes B."/>
            <person name="Huizar L."/>
            <person name="Hunter J.L."/>
            <person name="Jenkins J."/>
            <person name="Johnson-Hopson C."/>
            <person name="Khan S."/>
            <person name="Khaykin E."/>
            <person name="Kim C.J."/>
            <person name="Koo H.L."/>
            <person name="Kremenetskaia I."/>
            <person name="Kurtz D.B."/>
            <person name="Kwan A."/>
            <person name="Lam B."/>
            <person name="Langin-Hooper S."/>
            <person name="Lee A."/>
            <person name="Lee J.M."/>
            <person name="Lenz C.A."/>
            <person name="Li J.H."/>
            <person name="Li Y.-P."/>
            <person name="Lin X."/>
            <person name="Liu S.X."/>
            <person name="Liu Z.A."/>
            <person name="Luros J.S."/>
            <person name="Maiti R."/>
            <person name="Marziali A."/>
            <person name="Militscher J."/>
            <person name="Miranda M."/>
            <person name="Nguyen M."/>
            <person name="Nierman W.C."/>
            <person name="Osborne B.I."/>
            <person name="Pai G."/>
            <person name="Peterson J."/>
            <person name="Pham P.K."/>
            <person name="Rizzo M."/>
            <person name="Rooney T."/>
            <person name="Rowley D."/>
            <person name="Sakano H."/>
            <person name="Salzberg S.L."/>
            <person name="Schwartz J.R."/>
            <person name="Shinn P."/>
            <person name="Southwick A.M."/>
            <person name="Sun H."/>
            <person name="Tallon L.J."/>
            <person name="Tambunga G."/>
            <person name="Toriumi M.J."/>
            <person name="Town C.D."/>
            <person name="Utterback T."/>
            <person name="Van Aken S."/>
            <person name="Vaysberg M."/>
            <person name="Vysotskaia V.S."/>
            <person name="Walker M."/>
            <person name="Wu D."/>
            <person name="Yu G."/>
            <person name="Fraser C.M."/>
            <person name="Venter J.C."/>
            <person name="Davis R.W."/>
        </authorList>
    </citation>
    <scope>NUCLEOTIDE SEQUENCE [LARGE SCALE GENOMIC DNA]</scope>
    <source>
        <strain>cv. Columbia</strain>
    </source>
</reference>
<reference key="3">
    <citation type="journal article" date="2017" name="Plant J.">
        <title>Araport11: a complete reannotation of the Arabidopsis thaliana reference genome.</title>
        <authorList>
            <person name="Cheng C.Y."/>
            <person name="Krishnakumar V."/>
            <person name="Chan A.P."/>
            <person name="Thibaud-Nissen F."/>
            <person name="Schobel S."/>
            <person name="Town C.D."/>
        </authorList>
    </citation>
    <scope>GENOME REANNOTATION</scope>
    <source>
        <strain>cv. Columbia</strain>
    </source>
</reference>
<reference key="4">
    <citation type="journal article" date="2010" name="Plant Physiol.">
        <title>Involvement of the phospholipid sterol acyltransferase1 in plant sterol homeostasis and leaf senescence.</title>
        <authorList>
            <person name="Bouvier-Nave P."/>
            <person name="Berna A."/>
            <person name="Noiriel A."/>
            <person name="Compagnon V."/>
            <person name="Carlsson A.S."/>
            <person name="Banas A."/>
            <person name="Stymne S."/>
            <person name="Schaller H."/>
        </authorList>
    </citation>
    <scope>FUNCTION</scope>
    <scope>INDUCTION</scope>
    <scope>DISRUPTION PHENOTYPE</scope>
</reference>
<accession>Q4VCM1</accession>
<accession>Q9ZWC1</accession>